<name>WHIA_CARHZ</name>
<evidence type="ECO:0000255" key="1">
    <source>
        <dbReference type="HAMAP-Rule" id="MF_01420"/>
    </source>
</evidence>
<accession>Q3AFD7</accession>
<protein>
    <recommendedName>
        <fullName evidence="1">Probable cell division protein WhiA</fullName>
    </recommendedName>
</protein>
<reference key="1">
    <citation type="journal article" date="2005" name="PLoS Genet.">
        <title>Life in hot carbon monoxide: the complete genome sequence of Carboxydothermus hydrogenoformans Z-2901.</title>
        <authorList>
            <person name="Wu M."/>
            <person name="Ren Q."/>
            <person name="Durkin A.S."/>
            <person name="Daugherty S.C."/>
            <person name="Brinkac L.M."/>
            <person name="Dodson R.J."/>
            <person name="Madupu R."/>
            <person name="Sullivan S.A."/>
            <person name="Kolonay J.F."/>
            <person name="Nelson W.C."/>
            <person name="Tallon L.J."/>
            <person name="Jones K.M."/>
            <person name="Ulrich L.E."/>
            <person name="Gonzalez J.M."/>
            <person name="Zhulin I.B."/>
            <person name="Robb F.T."/>
            <person name="Eisen J.A."/>
        </authorList>
    </citation>
    <scope>NUCLEOTIDE SEQUENCE [LARGE SCALE GENOMIC DNA]</scope>
    <source>
        <strain>ATCC BAA-161 / DSM 6008 / Z-2901</strain>
    </source>
</reference>
<dbReference type="EMBL" id="CP000141">
    <property type="protein sequence ID" value="ABB15154.1"/>
    <property type="molecule type" value="Genomic_DNA"/>
</dbReference>
<dbReference type="RefSeq" id="WP_011343223.1">
    <property type="nucleotide sequence ID" value="NC_007503.1"/>
</dbReference>
<dbReference type="SMR" id="Q3AFD7"/>
<dbReference type="FunCoup" id="Q3AFD7">
    <property type="interactions" value="32"/>
</dbReference>
<dbReference type="STRING" id="246194.CHY_0275"/>
<dbReference type="KEGG" id="chy:CHY_0275"/>
<dbReference type="eggNOG" id="COG1481">
    <property type="taxonomic scope" value="Bacteria"/>
</dbReference>
<dbReference type="HOGENOM" id="CLU_053282_0_0_9"/>
<dbReference type="InParanoid" id="Q3AFD7"/>
<dbReference type="OrthoDB" id="401278at2"/>
<dbReference type="Proteomes" id="UP000002706">
    <property type="component" value="Chromosome"/>
</dbReference>
<dbReference type="GO" id="GO:0003677">
    <property type="term" value="F:DNA binding"/>
    <property type="evidence" value="ECO:0007669"/>
    <property type="project" value="UniProtKB-UniRule"/>
</dbReference>
<dbReference type="GO" id="GO:0051301">
    <property type="term" value="P:cell division"/>
    <property type="evidence" value="ECO:0007669"/>
    <property type="project" value="UniProtKB-UniRule"/>
</dbReference>
<dbReference type="GO" id="GO:0043937">
    <property type="term" value="P:regulation of sporulation"/>
    <property type="evidence" value="ECO:0007669"/>
    <property type="project" value="InterPro"/>
</dbReference>
<dbReference type="Gene3D" id="3.10.28.10">
    <property type="entry name" value="Homing endonucleases"/>
    <property type="match status" value="1"/>
</dbReference>
<dbReference type="HAMAP" id="MF_01420">
    <property type="entry name" value="HTH_type_WhiA"/>
    <property type="match status" value="1"/>
</dbReference>
<dbReference type="InterPro" id="IPR027434">
    <property type="entry name" value="Homing_endonucl"/>
</dbReference>
<dbReference type="InterPro" id="IPR018478">
    <property type="entry name" value="Sporu_reg_WhiA_N_dom"/>
</dbReference>
<dbReference type="InterPro" id="IPR003802">
    <property type="entry name" value="Sporulation_regulator_WhiA"/>
</dbReference>
<dbReference type="InterPro" id="IPR023054">
    <property type="entry name" value="Sporulation_regulator_WhiA_C"/>
</dbReference>
<dbReference type="InterPro" id="IPR039518">
    <property type="entry name" value="WhiA_LAGLIDADG_dom"/>
</dbReference>
<dbReference type="NCBIfam" id="TIGR00647">
    <property type="entry name" value="DNA_bind_WhiA"/>
    <property type="match status" value="1"/>
</dbReference>
<dbReference type="PANTHER" id="PTHR37307">
    <property type="entry name" value="CELL DIVISION PROTEIN WHIA-RELATED"/>
    <property type="match status" value="1"/>
</dbReference>
<dbReference type="PANTHER" id="PTHR37307:SF1">
    <property type="entry name" value="CELL DIVISION PROTEIN WHIA-RELATED"/>
    <property type="match status" value="1"/>
</dbReference>
<dbReference type="Pfam" id="PF02650">
    <property type="entry name" value="HTH_WhiA"/>
    <property type="match status" value="1"/>
</dbReference>
<dbReference type="Pfam" id="PF14527">
    <property type="entry name" value="LAGLIDADG_WhiA"/>
    <property type="match status" value="1"/>
</dbReference>
<dbReference type="Pfam" id="PF10298">
    <property type="entry name" value="WhiA_N"/>
    <property type="match status" value="1"/>
</dbReference>
<dbReference type="SUPFAM" id="SSF55608">
    <property type="entry name" value="Homing endonucleases"/>
    <property type="match status" value="1"/>
</dbReference>
<proteinExistence type="inferred from homology"/>
<keyword id="KW-0131">Cell cycle</keyword>
<keyword id="KW-0132">Cell division</keyword>
<keyword id="KW-0238">DNA-binding</keyword>
<keyword id="KW-1185">Reference proteome</keyword>
<organism>
    <name type="scientific">Carboxydothermus hydrogenoformans (strain ATCC BAA-161 / DSM 6008 / Z-2901)</name>
    <dbReference type="NCBI Taxonomy" id="246194"/>
    <lineage>
        <taxon>Bacteria</taxon>
        <taxon>Bacillati</taxon>
        <taxon>Bacillota</taxon>
        <taxon>Clostridia</taxon>
        <taxon>Thermoanaerobacterales</taxon>
        <taxon>Thermoanaerobacteraceae</taxon>
        <taxon>Carboxydothermus</taxon>
    </lineage>
</organism>
<feature type="chain" id="PRO_0000376452" description="Probable cell division protein WhiA">
    <location>
        <begin position="1"/>
        <end position="311"/>
    </location>
</feature>
<feature type="DNA-binding region" description="H-T-H motif" evidence="1">
    <location>
        <begin position="274"/>
        <end position="307"/>
    </location>
</feature>
<comment type="function">
    <text evidence="1">Involved in cell division and chromosome segregation.</text>
</comment>
<comment type="similarity">
    <text evidence="1">Belongs to the WhiA family.</text>
</comment>
<sequence>MSFARETKEELAHIIPQKSCCQRAELGAYVKMLGDLGISNKKLKLSLKTPLSFLARKILILLKNNGFKTKTLVQDHGRLSQKNFYYIEVEEHVDELLKEYGFIDEKGNLSNRINENYIKNDCCRRSFLRGVFLAGGSLNDPAGDYHLELNLPDEAFARQVSKVLQKYHFTFRLLKRKTAPFLYLKDAEQILSFLSLIGAHQSLLKFENVRVVKEVRNQVNRLVNCETANIKKAVKTAVKQIKDIEYIAEKIGLDNLEPALKEIALLRLDNPDLSLKELGSLLTPPLTKSGVNHRFRKLELIAEKIRNGALG</sequence>
<gene>
    <name evidence="1" type="primary">whiA</name>
    <name type="ordered locus">CHY_0275</name>
</gene>